<keyword id="KW-1185">Reference proteome</keyword>
<feature type="chain" id="PRO_0000050025" description="Uncharacterized protein YxiG">
    <location>
        <begin position="1"/>
        <end position="138"/>
    </location>
</feature>
<proteinExistence type="predicted"/>
<gene>
    <name type="primary">yxiG</name>
    <name type="ordered locus">BSU39190</name>
    <name type="ORF">N17J</name>
</gene>
<reference key="1">
    <citation type="journal article" date="1995" name="Microbiology">
        <title>Cloning and sequencing of a 29 kb region of the Bacillus subtilis genome containing the hut and wapA loci.</title>
        <authorList>
            <person name="Yoshida K."/>
            <person name="Sano H."/>
            <person name="Seki S."/>
            <person name="Oda M."/>
            <person name="Fujimura M."/>
            <person name="Fujita Y."/>
        </authorList>
    </citation>
    <scope>NUCLEOTIDE SEQUENCE [GENOMIC DNA]</scope>
    <source>
        <strain>168 / BGSC1A1</strain>
    </source>
</reference>
<reference key="2">
    <citation type="journal article" date="1996" name="Microbiology">
        <title>Sequencing of a 65 kb region of the Bacillus subtilis genome containing the lic and cel loci, and creation of a 177 kb contig covering the gnt-sacXY region.</title>
        <authorList>
            <person name="Yoshida K."/>
            <person name="Shindo K."/>
            <person name="Sano H."/>
            <person name="Seki S."/>
            <person name="Fujimura M."/>
            <person name="Yanai N."/>
            <person name="Miwa Y."/>
            <person name="Fujita Y."/>
        </authorList>
    </citation>
    <scope>NUCLEOTIDE SEQUENCE [GENOMIC DNA]</scope>
    <source>
        <strain>168 / BGSC1A1</strain>
    </source>
</reference>
<reference key="3">
    <citation type="journal article" date="1997" name="Nature">
        <title>The complete genome sequence of the Gram-positive bacterium Bacillus subtilis.</title>
        <authorList>
            <person name="Kunst F."/>
            <person name="Ogasawara N."/>
            <person name="Moszer I."/>
            <person name="Albertini A.M."/>
            <person name="Alloni G."/>
            <person name="Azevedo V."/>
            <person name="Bertero M.G."/>
            <person name="Bessieres P."/>
            <person name="Bolotin A."/>
            <person name="Borchert S."/>
            <person name="Borriss R."/>
            <person name="Boursier L."/>
            <person name="Brans A."/>
            <person name="Braun M."/>
            <person name="Brignell S.C."/>
            <person name="Bron S."/>
            <person name="Brouillet S."/>
            <person name="Bruschi C.V."/>
            <person name="Caldwell B."/>
            <person name="Capuano V."/>
            <person name="Carter N.M."/>
            <person name="Choi S.-K."/>
            <person name="Codani J.-J."/>
            <person name="Connerton I.F."/>
            <person name="Cummings N.J."/>
            <person name="Daniel R.A."/>
            <person name="Denizot F."/>
            <person name="Devine K.M."/>
            <person name="Duesterhoeft A."/>
            <person name="Ehrlich S.D."/>
            <person name="Emmerson P.T."/>
            <person name="Entian K.-D."/>
            <person name="Errington J."/>
            <person name="Fabret C."/>
            <person name="Ferrari E."/>
            <person name="Foulger D."/>
            <person name="Fritz C."/>
            <person name="Fujita M."/>
            <person name="Fujita Y."/>
            <person name="Fuma S."/>
            <person name="Galizzi A."/>
            <person name="Galleron N."/>
            <person name="Ghim S.-Y."/>
            <person name="Glaser P."/>
            <person name="Goffeau A."/>
            <person name="Golightly E.J."/>
            <person name="Grandi G."/>
            <person name="Guiseppi G."/>
            <person name="Guy B.J."/>
            <person name="Haga K."/>
            <person name="Haiech J."/>
            <person name="Harwood C.R."/>
            <person name="Henaut A."/>
            <person name="Hilbert H."/>
            <person name="Holsappel S."/>
            <person name="Hosono S."/>
            <person name="Hullo M.-F."/>
            <person name="Itaya M."/>
            <person name="Jones L.-M."/>
            <person name="Joris B."/>
            <person name="Karamata D."/>
            <person name="Kasahara Y."/>
            <person name="Klaerr-Blanchard M."/>
            <person name="Klein C."/>
            <person name="Kobayashi Y."/>
            <person name="Koetter P."/>
            <person name="Koningstein G."/>
            <person name="Krogh S."/>
            <person name="Kumano M."/>
            <person name="Kurita K."/>
            <person name="Lapidus A."/>
            <person name="Lardinois S."/>
            <person name="Lauber J."/>
            <person name="Lazarevic V."/>
            <person name="Lee S.-M."/>
            <person name="Levine A."/>
            <person name="Liu H."/>
            <person name="Masuda S."/>
            <person name="Mauel C."/>
            <person name="Medigue C."/>
            <person name="Medina N."/>
            <person name="Mellado R.P."/>
            <person name="Mizuno M."/>
            <person name="Moestl D."/>
            <person name="Nakai S."/>
            <person name="Noback M."/>
            <person name="Noone D."/>
            <person name="O'Reilly M."/>
            <person name="Ogawa K."/>
            <person name="Ogiwara A."/>
            <person name="Oudega B."/>
            <person name="Park S.-H."/>
            <person name="Parro V."/>
            <person name="Pohl T.M."/>
            <person name="Portetelle D."/>
            <person name="Porwollik S."/>
            <person name="Prescott A.M."/>
            <person name="Presecan E."/>
            <person name="Pujic P."/>
            <person name="Purnelle B."/>
            <person name="Rapoport G."/>
            <person name="Rey M."/>
            <person name="Reynolds S."/>
            <person name="Rieger M."/>
            <person name="Rivolta C."/>
            <person name="Rocha E."/>
            <person name="Roche B."/>
            <person name="Rose M."/>
            <person name="Sadaie Y."/>
            <person name="Sato T."/>
            <person name="Scanlan E."/>
            <person name="Schleich S."/>
            <person name="Schroeter R."/>
            <person name="Scoffone F."/>
            <person name="Sekiguchi J."/>
            <person name="Sekowska A."/>
            <person name="Seror S.J."/>
            <person name="Serror P."/>
            <person name="Shin B.-S."/>
            <person name="Soldo B."/>
            <person name="Sorokin A."/>
            <person name="Tacconi E."/>
            <person name="Takagi T."/>
            <person name="Takahashi H."/>
            <person name="Takemaru K."/>
            <person name="Takeuchi M."/>
            <person name="Tamakoshi A."/>
            <person name="Tanaka T."/>
            <person name="Terpstra P."/>
            <person name="Tognoni A."/>
            <person name="Tosato V."/>
            <person name="Uchiyama S."/>
            <person name="Vandenbol M."/>
            <person name="Vannier F."/>
            <person name="Vassarotti A."/>
            <person name="Viari A."/>
            <person name="Wambutt R."/>
            <person name="Wedler E."/>
            <person name="Wedler H."/>
            <person name="Weitzenegger T."/>
            <person name="Winters P."/>
            <person name="Wipat A."/>
            <person name="Yamamoto H."/>
            <person name="Yamane K."/>
            <person name="Yasumoto K."/>
            <person name="Yata K."/>
            <person name="Yoshida K."/>
            <person name="Yoshikawa H.-F."/>
            <person name="Zumstein E."/>
            <person name="Yoshikawa H."/>
            <person name="Danchin A."/>
        </authorList>
    </citation>
    <scope>NUCLEOTIDE SEQUENCE [LARGE SCALE GENOMIC DNA]</scope>
    <source>
        <strain>168</strain>
    </source>
</reference>
<organism>
    <name type="scientific">Bacillus subtilis (strain 168)</name>
    <dbReference type="NCBI Taxonomy" id="224308"/>
    <lineage>
        <taxon>Bacteria</taxon>
        <taxon>Bacillati</taxon>
        <taxon>Bacillota</taxon>
        <taxon>Bacilli</taxon>
        <taxon>Bacillales</taxon>
        <taxon>Bacillaceae</taxon>
        <taxon>Bacillus</taxon>
    </lineage>
</organism>
<protein>
    <recommendedName>
        <fullName>Uncharacterized protein YxiG</fullName>
    </recommendedName>
</protein>
<accession>P42299</accession>
<name>YXIG_BACSU</name>
<sequence length="138" mass="16228">MTMYQTINEWVDYIDKGCSVLHLDFNVFKKELSLDIKVFEDEGEYTHKISFQNVASAYYSADVGDMRLEKIDPEEYNWQVFEMSYHPEGIGNLSNSIIPEYQSNANFLIDMNRMLIAIEAETVRFDDQSFYAYQLNTK</sequence>
<dbReference type="EMBL" id="D31856">
    <property type="protein sequence ID" value="BAA06659.1"/>
    <property type="molecule type" value="Genomic_DNA"/>
</dbReference>
<dbReference type="EMBL" id="D83026">
    <property type="protein sequence ID" value="BAA11686.1"/>
    <property type="molecule type" value="Genomic_DNA"/>
</dbReference>
<dbReference type="EMBL" id="D29985">
    <property type="protein sequence ID" value="BAA06263.1"/>
    <property type="molecule type" value="Genomic_DNA"/>
</dbReference>
<dbReference type="EMBL" id="AL009126">
    <property type="protein sequence ID" value="CAB15955.1"/>
    <property type="molecule type" value="Genomic_DNA"/>
</dbReference>
<dbReference type="PIR" id="C70077">
    <property type="entry name" value="C70077"/>
</dbReference>
<dbReference type="RefSeq" id="NP_391798.1">
    <property type="nucleotide sequence ID" value="NC_000964.3"/>
</dbReference>
<dbReference type="RefSeq" id="WP_003227174.1">
    <property type="nucleotide sequence ID" value="NZ_OZ025638.1"/>
</dbReference>
<dbReference type="FunCoup" id="P42299">
    <property type="interactions" value="36"/>
</dbReference>
<dbReference type="STRING" id="224308.BSU39190"/>
<dbReference type="PaxDb" id="224308-BSU39190"/>
<dbReference type="EnsemblBacteria" id="CAB15955">
    <property type="protein sequence ID" value="CAB15955"/>
    <property type="gene ID" value="BSU_39190"/>
</dbReference>
<dbReference type="GeneID" id="937774"/>
<dbReference type="KEGG" id="bsu:BSU39190"/>
<dbReference type="PATRIC" id="fig|224308.179.peg.4243"/>
<dbReference type="eggNOG" id="ENOG50338YS">
    <property type="taxonomic scope" value="Bacteria"/>
</dbReference>
<dbReference type="InParanoid" id="P42299"/>
<dbReference type="OrthoDB" id="2891178at2"/>
<dbReference type="BioCyc" id="BSUB:BSU39190-MONOMER"/>
<dbReference type="Proteomes" id="UP000001570">
    <property type="component" value="Chromosome"/>
</dbReference>
<dbReference type="Pfam" id="PF24711">
    <property type="entry name" value="YxiG"/>
    <property type="match status" value="1"/>
</dbReference>